<comment type="function">
    <text evidence="1">Catalyzes the conversion of D-ribulose 5-phosphate to formate and 3,4-dihydroxy-2-butanone 4-phosphate.</text>
</comment>
<comment type="function">
    <text evidence="1">Catalyzes the conversion of GTP to 2,5-diamino-6-ribosylamino-4(3H)-pyrimidinone 5'-phosphate (DARP), formate and pyrophosphate.</text>
</comment>
<comment type="catalytic activity">
    <reaction evidence="1">
        <text>D-ribulose 5-phosphate = (2S)-2-hydroxy-3-oxobutyl phosphate + formate + H(+)</text>
        <dbReference type="Rhea" id="RHEA:18457"/>
        <dbReference type="ChEBI" id="CHEBI:15378"/>
        <dbReference type="ChEBI" id="CHEBI:15740"/>
        <dbReference type="ChEBI" id="CHEBI:58121"/>
        <dbReference type="ChEBI" id="CHEBI:58830"/>
        <dbReference type="EC" id="4.1.99.12"/>
    </reaction>
</comment>
<comment type="catalytic activity">
    <reaction evidence="1">
        <text>GTP + 4 H2O = 2,5-diamino-6-hydroxy-4-(5-phosphoribosylamino)-pyrimidine + formate + 2 phosphate + 3 H(+)</text>
        <dbReference type="Rhea" id="RHEA:23704"/>
        <dbReference type="ChEBI" id="CHEBI:15377"/>
        <dbReference type="ChEBI" id="CHEBI:15378"/>
        <dbReference type="ChEBI" id="CHEBI:15740"/>
        <dbReference type="ChEBI" id="CHEBI:37565"/>
        <dbReference type="ChEBI" id="CHEBI:43474"/>
        <dbReference type="ChEBI" id="CHEBI:58614"/>
        <dbReference type="EC" id="3.5.4.25"/>
    </reaction>
</comment>
<comment type="cofactor">
    <cofactor evidence="1">
        <name>Mg(2+)</name>
        <dbReference type="ChEBI" id="CHEBI:18420"/>
    </cofactor>
    <cofactor evidence="1">
        <name>Mn(2+)</name>
        <dbReference type="ChEBI" id="CHEBI:29035"/>
    </cofactor>
    <text evidence="1">Binds 2 divalent metal cations per subunit. Magnesium or manganese.</text>
</comment>
<comment type="cofactor">
    <cofactor evidence="1">
        <name>Zn(2+)</name>
        <dbReference type="ChEBI" id="CHEBI:29105"/>
    </cofactor>
    <text evidence="1">Binds 1 zinc ion per subunit.</text>
</comment>
<comment type="pathway">
    <text evidence="1">Cofactor biosynthesis; riboflavin biosynthesis; 2-hydroxy-3-oxobutyl phosphate from D-ribulose 5-phosphate: step 1/1.</text>
</comment>
<comment type="pathway">
    <text evidence="1">Cofactor biosynthesis; riboflavin biosynthesis; 5-amino-6-(D-ribitylamino)uracil from GTP: step 1/4.</text>
</comment>
<comment type="similarity">
    <text evidence="1">In the N-terminal section; belongs to the DHBP synthase family.</text>
</comment>
<comment type="similarity">
    <text evidence="1">In the C-terminal section; belongs to the GTP cyclohydrolase II family.</text>
</comment>
<evidence type="ECO:0000255" key="1">
    <source>
        <dbReference type="HAMAP-Rule" id="MF_01283"/>
    </source>
</evidence>
<gene>
    <name evidence="1" type="primary">ribBA</name>
    <name type="ordered locus">BA_4333</name>
    <name type="ordered locus">GBAA_4333</name>
    <name type="ordered locus">BAS4020</name>
</gene>
<protein>
    <recommendedName>
        <fullName evidence="1">Riboflavin biosynthesis protein RibBA</fullName>
    </recommendedName>
    <domain>
        <recommendedName>
            <fullName evidence="1">3,4-dihydroxy-2-butanone 4-phosphate synthase</fullName>
            <shortName evidence="1">DHBP synthase</shortName>
            <ecNumber evidence="1">4.1.99.12</ecNumber>
        </recommendedName>
    </domain>
    <domain>
        <recommendedName>
            <fullName evidence="1">GTP cyclohydrolase-2</fullName>
            <ecNumber evidence="1">3.5.4.25</ecNumber>
        </recommendedName>
        <alternativeName>
            <fullName evidence="1">GTP cyclohydrolase II</fullName>
        </alternativeName>
    </domain>
</protein>
<organism>
    <name type="scientific">Bacillus anthracis</name>
    <dbReference type="NCBI Taxonomy" id="1392"/>
    <lineage>
        <taxon>Bacteria</taxon>
        <taxon>Bacillati</taxon>
        <taxon>Bacillota</taxon>
        <taxon>Bacilli</taxon>
        <taxon>Bacillales</taxon>
        <taxon>Bacillaceae</taxon>
        <taxon>Bacillus</taxon>
        <taxon>Bacillus cereus group</taxon>
    </lineage>
</organism>
<name>RIBBA_BACAN</name>
<accession>Q81MB6</accession>
<accession>Q6HTR8</accession>
<accession>Q6KN06</accession>
<sequence>MFHRIEEALEDLKQGKVVIVCDDENRENEGDFIALAEYITPETINFMITHGRGLVCVPITEGYAERLQLEPMVSHNTDSHHTAFTVSIDHVSTTTGISAHERATTIQQLLNPASKGADFNRPGHIFPLIAKEGGVLRRAGHTEAAVDLAQLCGAEPAGVICEIINEDGTMARVPDLLQCAKQFDIKMITIEDLIAYRRHHETLVTREVEITLPTDFGTFQAIGYSNSLDTKEHIALVKGDISTGEPVLVRVHSECLTGDVFGSCRCDCGPQLHAALAQIEREGKGVLLYMRQEGRGIGLLNKLRAYKLQEEGFDTVEANEKLGFPADLRDYGIGAQILKDLGLQHLRLLTNNPRKIAGLQGYDLTVTERVPLQMPAKEENKTYLQTKVNKLGHLLNL</sequence>
<keyword id="KW-0342">GTP-binding</keyword>
<keyword id="KW-0378">Hydrolase</keyword>
<keyword id="KW-0456">Lyase</keyword>
<keyword id="KW-0460">Magnesium</keyword>
<keyword id="KW-0464">Manganese</keyword>
<keyword id="KW-0479">Metal-binding</keyword>
<keyword id="KW-0511">Multifunctional enzyme</keyword>
<keyword id="KW-0547">Nucleotide-binding</keyword>
<keyword id="KW-1185">Reference proteome</keyword>
<keyword id="KW-0686">Riboflavin biosynthesis</keyword>
<keyword id="KW-0862">Zinc</keyword>
<reference key="1">
    <citation type="journal article" date="2003" name="Nature">
        <title>The genome sequence of Bacillus anthracis Ames and comparison to closely related bacteria.</title>
        <authorList>
            <person name="Read T.D."/>
            <person name="Peterson S.N."/>
            <person name="Tourasse N.J."/>
            <person name="Baillie L.W."/>
            <person name="Paulsen I.T."/>
            <person name="Nelson K.E."/>
            <person name="Tettelin H."/>
            <person name="Fouts D.E."/>
            <person name="Eisen J.A."/>
            <person name="Gill S.R."/>
            <person name="Holtzapple E.K."/>
            <person name="Okstad O.A."/>
            <person name="Helgason E."/>
            <person name="Rilstone J."/>
            <person name="Wu M."/>
            <person name="Kolonay J.F."/>
            <person name="Beanan M.J."/>
            <person name="Dodson R.J."/>
            <person name="Brinkac L.M."/>
            <person name="Gwinn M.L."/>
            <person name="DeBoy R.T."/>
            <person name="Madpu R."/>
            <person name="Daugherty S.C."/>
            <person name="Durkin A.S."/>
            <person name="Haft D.H."/>
            <person name="Nelson W.C."/>
            <person name="Peterson J.D."/>
            <person name="Pop M."/>
            <person name="Khouri H.M."/>
            <person name="Radune D."/>
            <person name="Benton J.L."/>
            <person name="Mahamoud Y."/>
            <person name="Jiang L."/>
            <person name="Hance I.R."/>
            <person name="Weidman J.F."/>
            <person name="Berry K.J."/>
            <person name="Plaut R.D."/>
            <person name="Wolf A.M."/>
            <person name="Watkins K.L."/>
            <person name="Nierman W.C."/>
            <person name="Hazen A."/>
            <person name="Cline R.T."/>
            <person name="Redmond C."/>
            <person name="Thwaite J.E."/>
            <person name="White O."/>
            <person name="Salzberg S.L."/>
            <person name="Thomason B."/>
            <person name="Friedlander A.M."/>
            <person name="Koehler T.M."/>
            <person name="Hanna P.C."/>
            <person name="Kolstoe A.-B."/>
            <person name="Fraser C.M."/>
        </authorList>
    </citation>
    <scope>NUCLEOTIDE SEQUENCE [LARGE SCALE GENOMIC DNA]</scope>
    <source>
        <strain>Ames / isolate Porton</strain>
    </source>
</reference>
<reference key="2">
    <citation type="submission" date="2004-01" db="EMBL/GenBank/DDBJ databases">
        <title>Complete genome sequence of Bacillus anthracis Sterne.</title>
        <authorList>
            <person name="Brettin T.S."/>
            <person name="Bruce D."/>
            <person name="Challacombe J.F."/>
            <person name="Gilna P."/>
            <person name="Han C."/>
            <person name="Hill K."/>
            <person name="Hitchcock P."/>
            <person name="Jackson P."/>
            <person name="Keim P."/>
            <person name="Longmire J."/>
            <person name="Lucas S."/>
            <person name="Okinaka R."/>
            <person name="Richardson P."/>
            <person name="Rubin E."/>
            <person name="Tice H."/>
        </authorList>
    </citation>
    <scope>NUCLEOTIDE SEQUENCE [LARGE SCALE GENOMIC DNA]</scope>
    <source>
        <strain>Sterne</strain>
    </source>
</reference>
<reference key="3">
    <citation type="journal article" date="2009" name="J. Bacteriol.">
        <title>The complete genome sequence of Bacillus anthracis Ames 'Ancestor'.</title>
        <authorList>
            <person name="Ravel J."/>
            <person name="Jiang L."/>
            <person name="Stanley S.T."/>
            <person name="Wilson M.R."/>
            <person name="Decker R.S."/>
            <person name="Read T.D."/>
            <person name="Worsham P."/>
            <person name="Keim P.S."/>
            <person name="Salzberg S.L."/>
            <person name="Fraser-Liggett C.M."/>
            <person name="Rasko D.A."/>
        </authorList>
    </citation>
    <scope>NUCLEOTIDE SEQUENCE [LARGE SCALE GENOMIC DNA]</scope>
    <source>
        <strain>Ames ancestor</strain>
    </source>
</reference>
<feature type="chain" id="PRO_1000067415" description="Riboflavin biosynthesis protein RibBA">
    <location>
        <begin position="1"/>
        <end position="397"/>
    </location>
</feature>
<feature type="region of interest" description="DHBP synthase">
    <location>
        <begin position="1"/>
        <end position="199"/>
    </location>
</feature>
<feature type="region of interest" description="GTP cyclohydrolase II">
    <location>
        <begin position="200"/>
        <end position="397"/>
    </location>
</feature>
<feature type="active site" description="Proton acceptor; for GTP cyclohydrolase activity" evidence="1">
    <location>
        <position position="327"/>
    </location>
</feature>
<feature type="active site" description="Nucleophile; for GTP cyclohydrolase activity" evidence="1">
    <location>
        <position position="329"/>
    </location>
</feature>
<feature type="binding site" evidence="1">
    <location>
        <begin position="26"/>
        <end position="27"/>
    </location>
    <ligand>
        <name>D-ribulose 5-phosphate</name>
        <dbReference type="ChEBI" id="CHEBI:58121"/>
    </ligand>
</feature>
<feature type="binding site" evidence="1">
    <location>
        <position position="27"/>
    </location>
    <ligand>
        <name>Mg(2+)</name>
        <dbReference type="ChEBI" id="CHEBI:18420"/>
        <label>1</label>
    </ligand>
</feature>
<feature type="binding site" evidence="1">
    <location>
        <position position="27"/>
    </location>
    <ligand>
        <name>Mg(2+)</name>
        <dbReference type="ChEBI" id="CHEBI:18420"/>
        <label>2</label>
    </ligand>
</feature>
<feature type="binding site" evidence="1">
    <location>
        <position position="31"/>
    </location>
    <ligand>
        <name>D-ribulose 5-phosphate</name>
        <dbReference type="ChEBI" id="CHEBI:58121"/>
    </ligand>
</feature>
<feature type="binding site" evidence="1">
    <location>
        <begin position="138"/>
        <end position="142"/>
    </location>
    <ligand>
        <name>D-ribulose 5-phosphate</name>
        <dbReference type="ChEBI" id="CHEBI:58121"/>
    </ligand>
</feature>
<feature type="binding site" evidence="1">
    <location>
        <position position="141"/>
    </location>
    <ligand>
        <name>Mg(2+)</name>
        <dbReference type="ChEBI" id="CHEBI:18420"/>
        <label>2</label>
    </ligand>
</feature>
<feature type="binding site" evidence="1">
    <location>
        <position position="162"/>
    </location>
    <ligand>
        <name>D-ribulose 5-phosphate</name>
        <dbReference type="ChEBI" id="CHEBI:58121"/>
    </ligand>
</feature>
<feature type="binding site" evidence="1">
    <location>
        <begin position="250"/>
        <end position="254"/>
    </location>
    <ligand>
        <name>GTP</name>
        <dbReference type="ChEBI" id="CHEBI:37565"/>
    </ligand>
</feature>
<feature type="binding site" evidence="1">
    <location>
        <position position="255"/>
    </location>
    <ligand>
        <name>Zn(2+)</name>
        <dbReference type="ChEBI" id="CHEBI:29105"/>
        <note>catalytic</note>
    </ligand>
</feature>
<feature type="binding site" evidence="1">
    <location>
        <position position="266"/>
    </location>
    <ligand>
        <name>Zn(2+)</name>
        <dbReference type="ChEBI" id="CHEBI:29105"/>
        <note>catalytic</note>
    </ligand>
</feature>
<feature type="binding site" evidence="1">
    <location>
        <position position="268"/>
    </location>
    <ligand>
        <name>Zn(2+)</name>
        <dbReference type="ChEBI" id="CHEBI:29105"/>
        <note>catalytic</note>
    </ligand>
</feature>
<feature type="binding site" evidence="1">
    <location>
        <position position="271"/>
    </location>
    <ligand>
        <name>GTP</name>
        <dbReference type="ChEBI" id="CHEBI:37565"/>
    </ligand>
</feature>
<feature type="binding site" evidence="1">
    <location>
        <begin position="293"/>
        <end position="295"/>
    </location>
    <ligand>
        <name>GTP</name>
        <dbReference type="ChEBI" id="CHEBI:37565"/>
    </ligand>
</feature>
<feature type="binding site" evidence="1">
    <location>
        <position position="315"/>
    </location>
    <ligand>
        <name>GTP</name>
        <dbReference type="ChEBI" id="CHEBI:37565"/>
    </ligand>
</feature>
<feature type="binding site" evidence="1">
    <location>
        <position position="350"/>
    </location>
    <ligand>
        <name>GTP</name>
        <dbReference type="ChEBI" id="CHEBI:37565"/>
    </ligand>
</feature>
<feature type="binding site" evidence="1">
    <location>
        <position position="355"/>
    </location>
    <ligand>
        <name>GTP</name>
        <dbReference type="ChEBI" id="CHEBI:37565"/>
    </ligand>
</feature>
<feature type="site" description="Essential for DHBP synthase activity" evidence="1">
    <location>
        <position position="124"/>
    </location>
</feature>
<feature type="site" description="Essential for DHBP synthase activity" evidence="1">
    <location>
        <position position="162"/>
    </location>
</feature>
<dbReference type="EC" id="4.1.99.12" evidence="1"/>
<dbReference type="EC" id="3.5.4.25" evidence="1"/>
<dbReference type="EMBL" id="AE016879">
    <property type="protein sequence ID" value="AAP28052.1"/>
    <property type="molecule type" value="Genomic_DNA"/>
</dbReference>
<dbReference type="EMBL" id="AE017334">
    <property type="protein sequence ID" value="AAT33454.1"/>
    <property type="molecule type" value="Genomic_DNA"/>
</dbReference>
<dbReference type="EMBL" id="AE017225">
    <property type="protein sequence ID" value="AAT56321.1"/>
    <property type="molecule type" value="Genomic_DNA"/>
</dbReference>
<dbReference type="RefSeq" id="NP_846566.1">
    <property type="nucleotide sequence ID" value="NC_003997.3"/>
</dbReference>
<dbReference type="RefSeq" id="WP_000469013.1">
    <property type="nucleotide sequence ID" value="NZ_WXXJ01000027.1"/>
</dbReference>
<dbReference type="RefSeq" id="YP_030270.1">
    <property type="nucleotide sequence ID" value="NC_005945.1"/>
</dbReference>
<dbReference type="SMR" id="Q81MB6"/>
<dbReference type="IntAct" id="Q81MB6">
    <property type="interactions" value="1"/>
</dbReference>
<dbReference type="STRING" id="261594.GBAA_4333"/>
<dbReference type="DNASU" id="1087528"/>
<dbReference type="GeneID" id="45024000"/>
<dbReference type="KEGG" id="ban:BA_4333"/>
<dbReference type="KEGG" id="bar:GBAA_4333"/>
<dbReference type="KEGG" id="bat:BAS4020"/>
<dbReference type="PATRIC" id="fig|198094.11.peg.4302"/>
<dbReference type="eggNOG" id="COG0108">
    <property type="taxonomic scope" value="Bacteria"/>
</dbReference>
<dbReference type="eggNOG" id="COG0807">
    <property type="taxonomic scope" value="Bacteria"/>
</dbReference>
<dbReference type="HOGENOM" id="CLU_020273_1_2_9"/>
<dbReference type="OMA" id="ECRGLIC"/>
<dbReference type="OrthoDB" id="9793111at2"/>
<dbReference type="UniPathway" id="UPA00275">
    <property type="reaction ID" value="UER00399"/>
</dbReference>
<dbReference type="UniPathway" id="UPA00275">
    <property type="reaction ID" value="UER00400"/>
</dbReference>
<dbReference type="Proteomes" id="UP000000427">
    <property type="component" value="Chromosome"/>
</dbReference>
<dbReference type="Proteomes" id="UP000000594">
    <property type="component" value="Chromosome"/>
</dbReference>
<dbReference type="GO" id="GO:0005829">
    <property type="term" value="C:cytosol"/>
    <property type="evidence" value="ECO:0007669"/>
    <property type="project" value="TreeGrafter"/>
</dbReference>
<dbReference type="GO" id="GO:0008686">
    <property type="term" value="F:3,4-dihydroxy-2-butanone-4-phosphate synthase activity"/>
    <property type="evidence" value="ECO:0007669"/>
    <property type="project" value="UniProtKB-UniRule"/>
</dbReference>
<dbReference type="GO" id="GO:0005525">
    <property type="term" value="F:GTP binding"/>
    <property type="evidence" value="ECO:0007669"/>
    <property type="project" value="UniProtKB-KW"/>
</dbReference>
<dbReference type="GO" id="GO:0003935">
    <property type="term" value="F:GTP cyclohydrolase II activity"/>
    <property type="evidence" value="ECO:0007669"/>
    <property type="project" value="UniProtKB-UniRule"/>
</dbReference>
<dbReference type="GO" id="GO:0000287">
    <property type="term" value="F:magnesium ion binding"/>
    <property type="evidence" value="ECO:0007669"/>
    <property type="project" value="UniProtKB-UniRule"/>
</dbReference>
<dbReference type="GO" id="GO:0030145">
    <property type="term" value="F:manganese ion binding"/>
    <property type="evidence" value="ECO:0007669"/>
    <property type="project" value="UniProtKB-UniRule"/>
</dbReference>
<dbReference type="GO" id="GO:0008270">
    <property type="term" value="F:zinc ion binding"/>
    <property type="evidence" value="ECO:0007669"/>
    <property type="project" value="UniProtKB-UniRule"/>
</dbReference>
<dbReference type="GO" id="GO:0009231">
    <property type="term" value="P:riboflavin biosynthetic process"/>
    <property type="evidence" value="ECO:0007669"/>
    <property type="project" value="UniProtKB-UniRule"/>
</dbReference>
<dbReference type="CDD" id="cd00641">
    <property type="entry name" value="GTP_cyclohydro2"/>
    <property type="match status" value="1"/>
</dbReference>
<dbReference type="FunFam" id="3.40.50.10990:FF:000001">
    <property type="entry name" value="Riboflavin biosynthesis protein RibBA"/>
    <property type="match status" value="1"/>
</dbReference>
<dbReference type="FunFam" id="3.90.870.10:FF:000001">
    <property type="entry name" value="Riboflavin biosynthesis protein RibBA"/>
    <property type="match status" value="1"/>
</dbReference>
<dbReference type="Gene3D" id="3.90.870.10">
    <property type="entry name" value="DHBP synthase"/>
    <property type="match status" value="1"/>
</dbReference>
<dbReference type="Gene3D" id="3.40.50.10990">
    <property type="entry name" value="GTP cyclohydrolase II"/>
    <property type="match status" value="1"/>
</dbReference>
<dbReference type="HAMAP" id="MF_00179">
    <property type="entry name" value="RibA"/>
    <property type="match status" value="1"/>
</dbReference>
<dbReference type="HAMAP" id="MF_00180">
    <property type="entry name" value="RibB"/>
    <property type="match status" value="1"/>
</dbReference>
<dbReference type="HAMAP" id="MF_01283">
    <property type="entry name" value="RibBA"/>
    <property type="match status" value="1"/>
</dbReference>
<dbReference type="InterPro" id="IPR017945">
    <property type="entry name" value="DHBP_synth_RibB-like_a/b_dom"/>
</dbReference>
<dbReference type="InterPro" id="IPR000422">
    <property type="entry name" value="DHBP_synthase_RibB"/>
</dbReference>
<dbReference type="InterPro" id="IPR032677">
    <property type="entry name" value="GTP_cyclohydro_II"/>
</dbReference>
<dbReference type="InterPro" id="IPR000926">
    <property type="entry name" value="RibA"/>
</dbReference>
<dbReference type="InterPro" id="IPR036144">
    <property type="entry name" value="RibA-like_sf"/>
</dbReference>
<dbReference type="InterPro" id="IPR016299">
    <property type="entry name" value="Riboflavin_synth_RibBA"/>
</dbReference>
<dbReference type="NCBIfam" id="NF001591">
    <property type="entry name" value="PRK00393.1"/>
    <property type="match status" value="1"/>
</dbReference>
<dbReference type="NCBIfam" id="NF006803">
    <property type="entry name" value="PRK09311.1"/>
    <property type="match status" value="1"/>
</dbReference>
<dbReference type="NCBIfam" id="TIGR00505">
    <property type="entry name" value="ribA"/>
    <property type="match status" value="1"/>
</dbReference>
<dbReference type="NCBIfam" id="TIGR00506">
    <property type="entry name" value="ribB"/>
    <property type="match status" value="1"/>
</dbReference>
<dbReference type="PANTHER" id="PTHR21327:SF18">
    <property type="entry name" value="3,4-DIHYDROXY-2-BUTANONE 4-PHOSPHATE SYNTHASE"/>
    <property type="match status" value="1"/>
</dbReference>
<dbReference type="PANTHER" id="PTHR21327">
    <property type="entry name" value="GTP CYCLOHYDROLASE II-RELATED"/>
    <property type="match status" value="1"/>
</dbReference>
<dbReference type="Pfam" id="PF00926">
    <property type="entry name" value="DHBP_synthase"/>
    <property type="match status" value="1"/>
</dbReference>
<dbReference type="Pfam" id="PF00925">
    <property type="entry name" value="GTP_cyclohydro2"/>
    <property type="match status" value="1"/>
</dbReference>
<dbReference type="PIRSF" id="PIRSF001259">
    <property type="entry name" value="RibA"/>
    <property type="match status" value="1"/>
</dbReference>
<dbReference type="SUPFAM" id="SSF142695">
    <property type="entry name" value="RibA-like"/>
    <property type="match status" value="1"/>
</dbReference>
<dbReference type="SUPFAM" id="SSF55821">
    <property type="entry name" value="YrdC/RibB"/>
    <property type="match status" value="1"/>
</dbReference>
<proteinExistence type="inferred from homology"/>